<protein>
    <recommendedName>
        <fullName evidence="1">Large ribosomal subunit protein bL28</fullName>
    </recommendedName>
    <alternativeName>
        <fullName evidence="2">50S ribosomal protein L28</fullName>
    </alternativeName>
</protein>
<accession>A7GG84</accession>
<comment type="similarity">
    <text evidence="1">Belongs to the bacterial ribosomal protein bL28 family.</text>
</comment>
<gene>
    <name evidence="1" type="primary">rpmB</name>
    <name type="ordered locus">CLI_2559</name>
</gene>
<name>RL28_CLOBL</name>
<reference key="1">
    <citation type="submission" date="2007-06" db="EMBL/GenBank/DDBJ databases">
        <authorList>
            <person name="Brinkac L.M."/>
            <person name="Daugherty S."/>
            <person name="Dodson R.J."/>
            <person name="Madupu R."/>
            <person name="Brown J.L."/>
            <person name="Bruce D."/>
            <person name="Detter C."/>
            <person name="Munk C."/>
            <person name="Smith L.A."/>
            <person name="Smith T.J."/>
            <person name="White O."/>
            <person name="Brettin T.S."/>
        </authorList>
    </citation>
    <scope>NUCLEOTIDE SEQUENCE [LARGE SCALE GENOMIC DNA]</scope>
    <source>
        <strain>Langeland / NCTC 10281 / Type F</strain>
    </source>
</reference>
<sequence>MSRKCEICGKGVVYGVQYSHSHRQSKRSFAPNIKRVKAIVNGTPKRVHVCTRCLRSGKVQRAI</sequence>
<organism>
    <name type="scientific">Clostridium botulinum (strain Langeland / NCTC 10281 / Type F)</name>
    <dbReference type="NCBI Taxonomy" id="441772"/>
    <lineage>
        <taxon>Bacteria</taxon>
        <taxon>Bacillati</taxon>
        <taxon>Bacillota</taxon>
        <taxon>Clostridia</taxon>
        <taxon>Eubacteriales</taxon>
        <taxon>Clostridiaceae</taxon>
        <taxon>Clostridium</taxon>
    </lineage>
</organism>
<evidence type="ECO:0000255" key="1">
    <source>
        <dbReference type="HAMAP-Rule" id="MF_00373"/>
    </source>
</evidence>
<evidence type="ECO:0000305" key="2"/>
<feature type="chain" id="PRO_1000007213" description="Large ribosomal subunit protein bL28">
    <location>
        <begin position="1"/>
        <end position="63"/>
    </location>
</feature>
<dbReference type="EMBL" id="CP000728">
    <property type="protein sequence ID" value="ABS41615.1"/>
    <property type="molecule type" value="Genomic_DNA"/>
</dbReference>
<dbReference type="RefSeq" id="WP_003395976.1">
    <property type="nucleotide sequence ID" value="NC_009699.1"/>
</dbReference>
<dbReference type="SMR" id="A7GG84"/>
<dbReference type="GeneID" id="92939241"/>
<dbReference type="KEGG" id="cbf:CLI_2559"/>
<dbReference type="HOGENOM" id="CLU_064548_7_0_9"/>
<dbReference type="Proteomes" id="UP000002410">
    <property type="component" value="Chromosome"/>
</dbReference>
<dbReference type="GO" id="GO:1990904">
    <property type="term" value="C:ribonucleoprotein complex"/>
    <property type="evidence" value="ECO:0007669"/>
    <property type="project" value="UniProtKB-KW"/>
</dbReference>
<dbReference type="GO" id="GO:0005840">
    <property type="term" value="C:ribosome"/>
    <property type="evidence" value="ECO:0007669"/>
    <property type="project" value="UniProtKB-KW"/>
</dbReference>
<dbReference type="GO" id="GO:0003735">
    <property type="term" value="F:structural constituent of ribosome"/>
    <property type="evidence" value="ECO:0007669"/>
    <property type="project" value="InterPro"/>
</dbReference>
<dbReference type="GO" id="GO:0006412">
    <property type="term" value="P:translation"/>
    <property type="evidence" value="ECO:0007669"/>
    <property type="project" value="UniProtKB-UniRule"/>
</dbReference>
<dbReference type="Gene3D" id="2.30.170.40">
    <property type="entry name" value="Ribosomal protein L28/L24"/>
    <property type="match status" value="1"/>
</dbReference>
<dbReference type="HAMAP" id="MF_00373">
    <property type="entry name" value="Ribosomal_bL28"/>
    <property type="match status" value="1"/>
</dbReference>
<dbReference type="InterPro" id="IPR050096">
    <property type="entry name" value="Bacterial_rp_bL28"/>
</dbReference>
<dbReference type="InterPro" id="IPR026569">
    <property type="entry name" value="Ribosomal_bL28"/>
</dbReference>
<dbReference type="InterPro" id="IPR034704">
    <property type="entry name" value="Ribosomal_bL28/bL31-like_sf"/>
</dbReference>
<dbReference type="InterPro" id="IPR001383">
    <property type="entry name" value="Ribosomal_bL28_bact-type"/>
</dbReference>
<dbReference type="InterPro" id="IPR037147">
    <property type="entry name" value="Ribosomal_bL28_sf"/>
</dbReference>
<dbReference type="NCBIfam" id="TIGR00009">
    <property type="entry name" value="L28"/>
    <property type="match status" value="1"/>
</dbReference>
<dbReference type="PANTHER" id="PTHR39080">
    <property type="entry name" value="50S RIBOSOMAL PROTEIN L28"/>
    <property type="match status" value="1"/>
</dbReference>
<dbReference type="PANTHER" id="PTHR39080:SF1">
    <property type="entry name" value="LARGE RIBOSOMAL SUBUNIT PROTEIN BL28A"/>
    <property type="match status" value="1"/>
</dbReference>
<dbReference type="Pfam" id="PF00830">
    <property type="entry name" value="Ribosomal_L28"/>
    <property type="match status" value="1"/>
</dbReference>
<dbReference type="SUPFAM" id="SSF143800">
    <property type="entry name" value="L28p-like"/>
    <property type="match status" value="1"/>
</dbReference>
<proteinExistence type="inferred from homology"/>
<keyword id="KW-0687">Ribonucleoprotein</keyword>
<keyword id="KW-0689">Ribosomal protein</keyword>